<reference key="1">
    <citation type="journal article" date="2005" name="Biochemistry">
        <title>Genetic polymorphism and expression of a highly potent scorpion depressant toxin enable refinement of the effects on insect Na channels and illuminate the key role of Asn-58.</title>
        <authorList>
            <person name="Strugatsky D."/>
            <person name="Zilberberg N."/>
            <person name="Stankiewicz M."/>
            <person name="Ilan N."/>
            <person name="Turkov M."/>
            <person name="Cohen L."/>
            <person name="Pelhate M."/>
            <person name="Gilles N."/>
            <person name="Gordon D."/>
            <person name="Gurevitz M."/>
        </authorList>
    </citation>
    <scope>NUCLEOTIDE SEQUENCE [MRNA]</scope>
    <scope>PARTIAL PROTEIN SEQUENCE</scope>
    <scope>FUNCTION</scope>
    <scope>TOXIC DOSE</scope>
    <source>
        <tissue>Venom</tissue>
        <tissue>Venom gland</tissue>
    </source>
</reference>
<accession>P0C5I5</accession>
<keyword id="KW-0027">Amidation</keyword>
<keyword id="KW-0903">Direct protein sequencing</keyword>
<keyword id="KW-1015">Disulfide bond</keyword>
<keyword id="KW-0872">Ion channel impairing toxin</keyword>
<keyword id="KW-0528">Neurotoxin</keyword>
<keyword id="KW-0964">Secreted</keyword>
<keyword id="KW-0732">Signal</keyword>
<keyword id="KW-0800">Toxin</keyword>
<keyword id="KW-0738">Voltage-gated sodium channel impairing toxin</keyword>
<organism>
    <name type="scientific">Leiurus hebraeus</name>
    <name type="common">Hebrew deathstalker scorpion</name>
    <name type="synonym">Leiurus quinquestriatus hebraeus</name>
    <dbReference type="NCBI Taxonomy" id="2899558"/>
    <lineage>
        <taxon>Eukaryota</taxon>
        <taxon>Metazoa</taxon>
        <taxon>Ecdysozoa</taxon>
        <taxon>Arthropoda</taxon>
        <taxon>Chelicerata</taxon>
        <taxon>Arachnida</taxon>
        <taxon>Scorpiones</taxon>
        <taxon>Buthida</taxon>
        <taxon>Buthoidea</taxon>
        <taxon>Buthidae</taxon>
        <taxon>Leiurus</taxon>
    </lineage>
</organism>
<proteinExistence type="evidence at protein level"/>
<name>SIX3C_LEIHE</name>
<dbReference type="SMR" id="P0C5I5"/>
<dbReference type="GO" id="GO:0005576">
    <property type="term" value="C:extracellular region"/>
    <property type="evidence" value="ECO:0007669"/>
    <property type="project" value="UniProtKB-SubCell"/>
</dbReference>
<dbReference type="GO" id="GO:0019871">
    <property type="term" value="F:sodium channel inhibitor activity"/>
    <property type="evidence" value="ECO:0007669"/>
    <property type="project" value="InterPro"/>
</dbReference>
<dbReference type="GO" id="GO:0090729">
    <property type="term" value="F:toxin activity"/>
    <property type="evidence" value="ECO:0007669"/>
    <property type="project" value="UniProtKB-KW"/>
</dbReference>
<dbReference type="GO" id="GO:0006952">
    <property type="term" value="P:defense response"/>
    <property type="evidence" value="ECO:0007669"/>
    <property type="project" value="InterPro"/>
</dbReference>
<dbReference type="CDD" id="cd23106">
    <property type="entry name" value="neurotoxins_LC_scorpion"/>
    <property type="match status" value="1"/>
</dbReference>
<dbReference type="Gene3D" id="3.30.30.10">
    <property type="entry name" value="Knottin, scorpion toxin-like"/>
    <property type="match status" value="1"/>
</dbReference>
<dbReference type="InterPro" id="IPR044062">
    <property type="entry name" value="LCN-type_CS_alpha_beta_dom"/>
</dbReference>
<dbReference type="InterPro" id="IPR003614">
    <property type="entry name" value="Scorpion_toxin-like"/>
</dbReference>
<dbReference type="InterPro" id="IPR036574">
    <property type="entry name" value="Scorpion_toxin-like_sf"/>
</dbReference>
<dbReference type="InterPro" id="IPR018218">
    <property type="entry name" value="Scorpion_toxinL"/>
</dbReference>
<dbReference type="InterPro" id="IPR002061">
    <property type="entry name" value="Scorpion_toxinL/defensin"/>
</dbReference>
<dbReference type="Pfam" id="PF00537">
    <property type="entry name" value="Toxin_3"/>
    <property type="match status" value="1"/>
</dbReference>
<dbReference type="PRINTS" id="PR00285">
    <property type="entry name" value="SCORPNTOXIN"/>
</dbReference>
<dbReference type="SMART" id="SM00505">
    <property type="entry name" value="Knot1"/>
    <property type="match status" value="1"/>
</dbReference>
<dbReference type="SUPFAM" id="SSF57095">
    <property type="entry name" value="Scorpion toxin-like"/>
    <property type="match status" value="1"/>
</dbReference>
<dbReference type="PROSITE" id="PS51863">
    <property type="entry name" value="LCN_CSAB"/>
    <property type="match status" value="1"/>
</dbReference>
<sequence>MKLLLLLTISASMLIEGLVNADGYIRGGDGCKVSCVINHVFCDNECKAAGGSYGYCWAWGLACWCEGLPAEREWDYETNTCGGKK</sequence>
<protein>
    <recommendedName>
        <fullName>Beta-insect depressant toxin Lqh-dprIT3c</fullName>
    </recommendedName>
</protein>
<feature type="signal peptide">
    <location>
        <begin position="1"/>
        <end position="21"/>
    </location>
</feature>
<feature type="chain" id="PRO_0000307613" description="Beta-insect depressant toxin Lqh-dprIT3c">
    <location>
        <begin position="22"/>
        <end position="82"/>
    </location>
</feature>
<feature type="domain" description="LCN-type CS-alpha/beta" evidence="2">
    <location>
        <begin position="22"/>
        <end position="82"/>
    </location>
</feature>
<feature type="site" description="Important for toxicity">
    <location>
        <position position="79"/>
    </location>
</feature>
<feature type="modified residue" description="Glycine amide" evidence="1">
    <location>
        <position position="82"/>
    </location>
</feature>
<feature type="disulfide bond" evidence="2">
    <location>
        <begin position="31"/>
        <end position="81"/>
    </location>
</feature>
<feature type="disulfide bond" evidence="2">
    <location>
        <begin position="35"/>
        <end position="56"/>
    </location>
</feature>
<feature type="disulfide bond" evidence="2">
    <location>
        <begin position="42"/>
        <end position="63"/>
    </location>
</feature>
<feature type="disulfide bond" evidence="2">
    <location>
        <begin position="46"/>
        <end position="65"/>
    </location>
</feature>
<evidence type="ECO:0000250" key="1"/>
<evidence type="ECO:0000255" key="2">
    <source>
        <dbReference type="PROSITE-ProRule" id="PRU01210"/>
    </source>
</evidence>
<evidence type="ECO:0000269" key="3">
    <source>
    </source>
</evidence>
<evidence type="ECO:0000305" key="4"/>
<comment type="function">
    <text evidence="3">Depressant insect beta-toxins cause a transient contraction paralysis followed by a slow flaccid paralysis. They bind voltage-independently at site-4 of sodium channels (Nav) and block action potentials, primarily by depolarizing the axonal membrane and suppressing the sodium current. This depressant toxin is active only on insects. It is found in a relatively small amount in the venom, and its activity on insects is 10-fold higher compared to other known depressant toxins.</text>
</comment>
<comment type="subcellular location">
    <subcellularLocation>
        <location>Secreted</location>
    </subcellularLocation>
</comment>
<comment type="tissue specificity">
    <text>Expressed by the venom gland.</text>
</comment>
<comment type="domain">
    <text evidence="4">Has the structural arrangement of an alpha-helix connected to antiparallel beta-sheets by disulfide bonds (CS-alpha/beta).</text>
</comment>
<comment type="toxic dose">
    <text evidence="3">PD(50) is 3-5 ng/100 mg of body weight of Sarcophaga larvae for both contraction and flaccid paralysis.</text>
</comment>
<comment type="similarity">
    <text evidence="4">Belongs to the long (4 C-C) scorpion toxin superfamily. Sodium channel inhibitor family. Beta subfamily.</text>
</comment>